<dbReference type="EC" id="7.1.1.-" evidence="1"/>
<dbReference type="EMBL" id="CP000802">
    <property type="protein sequence ID" value="ABV06705.1"/>
    <property type="molecule type" value="Genomic_DNA"/>
</dbReference>
<dbReference type="RefSeq" id="WP_000118507.1">
    <property type="nucleotide sequence ID" value="NC_009800.1"/>
</dbReference>
<dbReference type="SMR" id="A8A2F1"/>
<dbReference type="GeneID" id="93774892"/>
<dbReference type="KEGG" id="ecx:EcHS_A2431"/>
<dbReference type="HOGENOM" id="CLU_015134_0_1_6"/>
<dbReference type="GO" id="GO:0005886">
    <property type="term" value="C:plasma membrane"/>
    <property type="evidence" value="ECO:0007669"/>
    <property type="project" value="UniProtKB-SubCell"/>
</dbReference>
<dbReference type="GO" id="GO:0003954">
    <property type="term" value="F:NADH dehydrogenase activity"/>
    <property type="evidence" value="ECO:0007669"/>
    <property type="project" value="TreeGrafter"/>
</dbReference>
<dbReference type="GO" id="GO:0016655">
    <property type="term" value="F:oxidoreductase activity, acting on NAD(P)H, quinone or similar compound as acceptor"/>
    <property type="evidence" value="ECO:0007669"/>
    <property type="project" value="UniProtKB-UniRule"/>
</dbReference>
<dbReference type="GO" id="GO:0048038">
    <property type="term" value="F:quinone binding"/>
    <property type="evidence" value="ECO:0007669"/>
    <property type="project" value="UniProtKB-KW"/>
</dbReference>
<dbReference type="GO" id="GO:0009060">
    <property type="term" value="P:aerobic respiration"/>
    <property type="evidence" value="ECO:0007669"/>
    <property type="project" value="TreeGrafter"/>
</dbReference>
<dbReference type="HAMAP" id="MF_01350">
    <property type="entry name" value="NDH1_NuoH"/>
    <property type="match status" value="1"/>
</dbReference>
<dbReference type="InterPro" id="IPR001694">
    <property type="entry name" value="NADH_UbQ_OxRdtase_su1/FPO"/>
</dbReference>
<dbReference type="InterPro" id="IPR018086">
    <property type="entry name" value="NADH_UbQ_OxRdtase_su1_CS"/>
</dbReference>
<dbReference type="NCBIfam" id="NF004740">
    <property type="entry name" value="PRK06076.1-1"/>
    <property type="match status" value="1"/>
</dbReference>
<dbReference type="NCBIfam" id="NF004741">
    <property type="entry name" value="PRK06076.1-2"/>
    <property type="match status" value="1"/>
</dbReference>
<dbReference type="PANTHER" id="PTHR11432">
    <property type="entry name" value="NADH DEHYDROGENASE SUBUNIT 1"/>
    <property type="match status" value="1"/>
</dbReference>
<dbReference type="PANTHER" id="PTHR11432:SF3">
    <property type="entry name" value="NADH-UBIQUINONE OXIDOREDUCTASE CHAIN 1"/>
    <property type="match status" value="1"/>
</dbReference>
<dbReference type="Pfam" id="PF00146">
    <property type="entry name" value="NADHdh"/>
    <property type="match status" value="1"/>
</dbReference>
<dbReference type="PROSITE" id="PS00667">
    <property type="entry name" value="COMPLEX1_ND1_1"/>
    <property type="match status" value="1"/>
</dbReference>
<dbReference type="PROSITE" id="PS00668">
    <property type="entry name" value="COMPLEX1_ND1_2"/>
    <property type="match status" value="1"/>
</dbReference>
<feature type="chain" id="PRO_1000067742" description="NADH-quinone oxidoreductase subunit H">
    <location>
        <begin position="1"/>
        <end position="325"/>
    </location>
</feature>
<feature type="transmembrane region" description="Helical" evidence="1">
    <location>
        <begin position="11"/>
        <end position="31"/>
    </location>
</feature>
<feature type="transmembrane region" description="Helical" evidence="1">
    <location>
        <begin position="81"/>
        <end position="101"/>
    </location>
</feature>
<feature type="transmembrane region" description="Helical" evidence="1">
    <location>
        <begin position="114"/>
        <end position="134"/>
    </location>
</feature>
<feature type="transmembrane region" description="Helical" evidence="1">
    <location>
        <begin position="154"/>
        <end position="174"/>
    </location>
</feature>
<feature type="transmembrane region" description="Helical" evidence="1">
    <location>
        <begin position="186"/>
        <end position="206"/>
    </location>
</feature>
<feature type="transmembrane region" description="Helical" evidence="1">
    <location>
        <begin position="237"/>
        <end position="257"/>
    </location>
</feature>
<feature type="transmembrane region" description="Helical" evidence="1">
    <location>
        <begin position="265"/>
        <end position="285"/>
    </location>
</feature>
<feature type="transmembrane region" description="Helical" evidence="1">
    <location>
        <begin position="304"/>
        <end position="324"/>
    </location>
</feature>
<evidence type="ECO:0000255" key="1">
    <source>
        <dbReference type="HAMAP-Rule" id="MF_01350"/>
    </source>
</evidence>
<proteinExistence type="inferred from homology"/>
<name>NUOH_ECOHS</name>
<comment type="function">
    <text evidence="1">NDH-1 shuttles electrons from NADH, via FMN and iron-sulfur (Fe-S) centers, to quinones in the respiratory chain. The immediate electron acceptor for the enzyme in this species is believed to be ubiquinone. Couples the redox reaction to proton translocation (for every two electrons transferred, four hydrogen ions are translocated across the cytoplasmic membrane), and thus conserves the redox energy in a proton gradient. This subunit may bind ubiquinone.</text>
</comment>
<comment type="catalytic activity">
    <reaction evidence="1">
        <text>a quinone + NADH + 5 H(+)(in) = a quinol + NAD(+) + 4 H(+)(out)</text>
        <dbReference type="Rhea" id="RHEA:57888"/>
        <dbReference type="ChEBI" id="CHEBI:15378"/>
        <dbReference type="ChEBI" id="CHEBI:24646"/>
        <dbReference type="ChEBI" id="CHEBI:57540"/>
        <dbReference type="ChEBI" id="CHEBI:57945"/>
        <dbReference type="ChEBI" id="CHEBI:132124"/>
    </reaction>
</comment>
<comment type="subunit">
    <text evidence="1">NDH-1 is composed of 13 different subunits. Subunits NuoA, H, J, K, L, M, N constitute the membrane sector of the complex.</text>
</comment>
<comment type="subcellular location">
    <subcellularLocation>
        <location evidence="1">Cell inner membrane</location>
        <topology evidence="1">Multi-pass membrane protein</topology>
    </subcellularLocation>
</comment>
<comment type="similarity">
    <text evidence="1">Belongs to the complex I subunit 1 family.</text>
</comment>
<accession>A8A2F1</accession>
<gene>
    <name evidence="1" type="primary">nuoH</name>
    <name type="ordered locus">EcHS_A2431</name>
</gene>
<sequence>MSWISPELIEILLTILKAVVILLVVVTCGAFMSFGERRLLGLFQNRYGPNRVGWGGSLQLVADMIKMFFKEDWIPKFSDRVIFTLAPMIAFTSLLLAFAIVPVSPGWVVADLNIGILFFLMMAGLAVYAVLFAGWSSNNKYSLLGAMRASAQTLSYEVFLGLSLMGVVAQAGSFNMTDIVNSQAHVWNVIPQFFGFITFAIAGVAVCHRHPFDQPEAEQELADGYHIEYSGMKFGLFFVGEYIGIVTISALMVTLFFGGWQGPLLPPFIWFALKTAFFMMMFILIRASLPRPRYDQVMSFGWKICLPLTLINLLVTAAVILWQAQ</sequence>
<protein>
    <recommendedName>
        <fullName evidence="1">NADH-quinone oxidoreductase subunit H</fullName>
        <ecNumber evidence="1">7.1.1.-</ecNumber>
    </recommendedName>
    <alternativeName>
        <fullName evidence="1">NADH dehydrogenase I subunit H</fullName>
    </alternativeName>
    <alternativeName>
        <fullName evidence="1">NDH-1 subunit H</fullName>
    </alternativeName>
</protein>
<keyword id="KW-0997">Cell inner membrane</keyword>
<keyword id="KW-1003">Cell membrane</keyword>
<keyword id="KW-0472">Membrane</keyword>
<keyword id="KW-0520">NAD</keyword>
<keyword id="KW-0874">Quinone</keyword>
<keyword id="KW-1278">Translocase</keyword>
<keyword id="KW-0812">Transmembrane</keyword>
<keyword id="KW-1133">Transmembrane helix</keyword>
<keyword id="KW-0830">Ubiquinone</keyword>
<reference key="1">
    <citation type="journal article" date="2008" name="J. Bacteriol.">
        <title>The pangenome structure of Escherichia coli: comparative genomic analysis of E. coli commensal and pathogenic isolates.</title>
        <authorList>
            <person name="Rasko D.A."/>
            <person name="Rosovitz M.J."/>
            <person name="Myers G.S.A."/>
            <person name="Mongodin E.F."/>
            <person name="Fricke W.F."/>
            <person name="Gajer P."/>
            <person name="Crabtree J."/>
            <person name="Sebaihia M."/>
            <person name="Thomson N.R."/>
            <person name="Chaudhuri R."/>
            <person name="Henderson I.R."/>
            <person name="Sperandio V."/>
            <person name="Ravel J."/>
        </authorList>
    </citation>
    <scope>NUCLEOTIDE SEQUENCE [LARGE SCALE GENOMIC DNA]</scope>
    <source>
        <strain>HS</strain>
    </source>
</reference>
<organism>
    <name type="scientific">Escherichia coli O9:H4 (strain HS)</name>
    <dbReference type="NCBI Taxonomy" id="331112"/>
    <lineage>
        <taxon>Bacteria</taxon>
        <taxon>Pseudomonadati</taxon>
        <taxon>Pseudomonadota</taxon>
        <taxon>Gammaproteobacteria</taxon>
        <taxon>Enterobacterales</taxon>
        <taxon>Enterobacteriaceae</taxon>
        <taxon>Escherichia</taxon>
    </lineage>
</organism>